<sequence length="473" mass="51147">MSGQGPPSNLTPQQQHMIMQQQQQQQMMRQQQIQQQQLHQRQLQQQQAQQSYQRSRTPQMQQHPGGGSPGSHLQMHPHLQSQGHMQPRSPLVGQHHPAPGSIPPGNPATPQMMQQQMGMNQPMSLPAPHVSRPGSVAPPASVPPNMHTGPSSNQMDQMGGQSQYSHHLQPQQPLSRPGSQQSHIAGGHGGPHSVQQPGSVLAPGSIQQPGSLLAPGSMHQPGSVQQPGSLGAPLSHTGAGGPQSVQGYGPGSVQPPGSAQAPSSVQPGSTFAPGSLQAPASQQPPASIQPPPSAASGSVAGPASAAPAKVEPLKPNEEQIRMVQDPVDLVRNLVQKDLRMSVVEMNKRGAELLHQKEEGAIKEEDRQQYKRATNDFHAVCDEIDRTLTTIMETAKQITKLDKVFQDRTSKEIDGEAMVNSVQKFVDETGIVQKMFDDTVNSVTSTMEKMRRRQKKWKDQQQQQENAEDAEMAE</sequence>
<comment type="function">
    <text evidence="1">Component of the Mediator complex, a coactivator involved in the regulated transcription of nearly all RNA polymerase II-dependent genes. Mediator functions as a bridge to convey information from gene-specific regulatory proteins to the basal RNA polymerase II transcription machinery. Mediator is recruited to promoters by direct interactions with regulatory proteins and serves as a scaffold for the assembly of a functional preinitiation complex with RNA polymerase II and the general transcription factors (By similarity).</text>
</comment>
<comment type="subunit">
    <text evidence="1">Component of the Mediator complex.</text>
</comment>
<comment type="subcellular location">
    <subcellularLocation>
        <location evidence="3">Nucleus</location>
    </subcellularLocation>
</comment>
<comment type="similarity">
    <text evidence="3">Belongs to the Mediator complex subunit 29 family.</text>
</comment>
<name>MED29_CAEBR</name>
<evidence type="ECO:0000250" key="1"/>
<evidence type="ECO:0000256" key="2">
    <source>
        <dbReference type="SAM" id="MobiDB-lite"/>
    </source>
</evidence>
<evidence type="ECO:0000305" key="3"/>
<keyword id="KW-0010">Activator</keyword>
<keyword id="KW-0539">Nucleus</keyword>
<keyword id="KW-1185">Reference proteome</keyword>
<keyword id="KW-0804">Transcription</keyword>
<keyword id="KW-0805">Transcription regulation</keyword>
<accession>Q60YF6</accession>
<accession>A8XSA0</accession>
<reference key="1">
    <citation type="journal article" date="2003" name="PLoS Biol.">
        <title>The genome sequence of Caenorhabditis briggsae: a platform for comparative genomics.</title>
        <authorList>
            <person name="Stein L.D."/>
            <person name="Bao Z."/>
            <person name="Blasiar D."/>
            <person name="Blumenthal T."/>
            <person name="Brent M.R."/>
            <person name="Chen N."/>
            <person name="Chinwalla A."/>
            <person name="Clarke L."/>
            <person name="Clee C."/>
            <person name="Coghlan A."/>
            <person name="Coulson A."/>
            <person name="D'Eustachio P."/>
            <person name="Fitch D.H.A."/>
            <person name="Fulton L.A."/>
            <person name="Fulton R.E."/>
            <person name="Griffiths-Jones S."/>
            <person name="Harris T.W."/>
            <person name="Hillier L.W."/>
            <person name="Kamath R."/>
            <person name="Kuwabara P.E."/>
            <person name="Mardis E.R."/>
            <person name="Marra M.A."/>
            <person name="Miner T.L."/>
            <person name="Minx P."/>
            <person name="Mullikin J.C."/>
            <person name="Plumb R.W."/>
            <person name="Rogers J."/>
            <person name="Schein J.E."/>
            <person name="Sohrmann M."/>
            <person name="Spieth J."/>
            <person name="Stajich J.E."/>
            <person name="Wei C."/>
            <person name="Willey D."/>
            <person name="Wilson R.K."/>
            <person name="Durbin R.M."/>
            <person name="Waterston R.H."/>
        </authorList>
    </citation>
    <scope>NUCLEOTIDE SEQUENCE [LARGE SCALE GENOMIC DNA]</scope>
    <source>
        <strain>AF16</strain>
    </source>
</reference>
<dbReference type="EMBL" id="HE600936">
    <property type="protein sequence ID" value="CAP35742.3"/>
    <property type="molecule type" value="Genomic_DNA"/>
</dbReference>
<dbReference type="SMR" id="Q60YF6"/>
<dbReference type="FunCoup" id="Q60YF6">
    <property type="interactions" value="1744"/>
</dbReference>
<dbReference type="STRING" id="6238.Q60YF6"/>
<dbReference type="WormBase" id="CBG18261">
    <property type="protein sequence ID" value="CBP40730"/>
    <property type="gene ID" value="WBGene00037712"/>
    <property type="gene designation" value="Cbr-mdt-29"/>
</dbReference>
<dbReference type="eggNOG" id="ENOG502S549">
    <property type="taxonomic scope" value="Eukaryota"/>
</dbReference>
<dbReference type="HOGENOM" id="CLU_597499_0_0_1"/>
<dbReference type="InParanoid" id="Q60YF6"/>
<dbReference type="OMA" id="GEMANVN"/>
<dbReference type="Proteomes" id="UP000008549">
    <property type="component" value="Unassembled WGS sequence"/>
</dbReference>
<dbReference type="GO" id="GO:0016592">
    <property type="term" value="C:mediator complex"/>
    <property type="evidence" value="ECO:0007669"/>
    <property type="project" value="InterPro"/>
</dbReference>
<dbReference type="InterPro" id="IPR052145">
    <property type="entry name" value="Mediator/Homeobox_domain"/>
</dbReference>
<dbReference type="InterPro" id="IPR021018">
    <property type="entry name" value="Mediator_Med29_met"/>
</dbReference>
<dbReference type="PANTHER" id="PTHR24330">
    <property type="entry name" value="HOMEOBOX PROTEIN BARH-LIKE"/>
    <property type="match status" value="1"/>
</dbReference>
<dbReference type="PANTHER" id="PTHR24330:SF19">
    <property type="entry name" value="MEDIATOR OF RNA POLYMERASE II TRANSCRIPTION SUBUNIT 29"/>
    <property type="match status" value="1"/>
</dbReference>
<dbReference type="Pfam" id="PF11568">
    <property type="entry name" value="Med29"/>
    <property type="match status" value="1"/>
</dbReference>
<feature type="chain" id="PRO_0000305705" description="Mediator of RNA polymerase II transcription subunit 29">
    <location>
        <begin position="1"/>
        <end position="473"/>
    </location>
</feature>
<feature type="region of interest" description="Disordered" evidence="2">
    <location>
        <begin position="1"/>
        <end position="319"/>
    </location>
</feature>
<feature type="region of interest" description="Disordered" evidence="2">
    <location>
        <begin position="444"/>
        <end position="473"/>
    </location>
</feature>
<feature type="compositionally biased region" description="Polar residues" evidence="2">
    <location>
        <begin position="1"/>
        <end position="12"/>
    </location>
</feature>
<feature type="compositionally biased region" description="Low complexity" evidence="2">
    <location>
        <begin position="13"/>
        <end position="50"/>
    </location>
</feature>
<feature type="compositionally biased region" description="Polar residues" evidence="2">
    <location>
        <begin position="51"/>
        <end position="62"/>
    </location>
</feature>
<feature type="compositionally biased region" description="Low complexity" evidence="2">
    <location>
        <begin position="111"/>
        <end position="123"/>
    </location>
</feature>
<feature type="compositionally biased region" description="Low complexity" evidence="2">
    <location>
        <begin position="130"/>
        <end position="139"/>
    </location>
</feature>
<feature type="compositionally biased region" description="Polar residues" evidence="2">
    <location>
        <begin position="148"/>
        <end position="183"/>
    </location>
</feature>
<feature type="compositionally biased region" description="Polar residues" evidence="2">
    <location>
        <begin position="255"/>
        <end position="269"/>
    </location>
</feature>
<feature type="compositionally biased region" description="Low complexity" evidence="2">
    <location>
        <begin position="272"/>
        <end position="286"/>
    </location>
</feature>
<feature type="compositionally biased region" description="Low complexity" evidence="2">
    <location>
        <begin position="294"/>
        <end position="308"/>
    </location>
</feature>
<gene>
    <name type="primary">mdt-29</name>
    <name type="ORF">CBG18261</name>
</gene>
<protein>
    <recommendedName>
        <fullName>Mediator of RNA polymerase II transcription subunit 29</fullName>
    </recommendedName>
    <alternativeName>
        <fullName>Mediator complex subunit 29</fullName>
    </alternativeName>
</protein>
<organism>
    <name type="scientific">Caenorhabditis briggsae</name>
    <dbReference type="NCBI Taxonomy" id="6238"/>
    <lineage>
        <taxon>Eukaryota</taxon>
        <taxon>Metazoa</taxon>
        <taxon>Ecdysozoa</taxon>
        <taxon>Nematoda</taxon>
        <taxon>Chromadorea</taxon>
        <taxon>Rhabditida</taxon>
        <taxon>Rhabditina</taxon>
        <taxon>Rhabditomorpha</taxon>
        <taxon>Rhabditoidea</taxon>
        <taxon>Rhabditidae</taxon>
        <taxon>Peloderinae</taxon>
        <taxon>Caenorhabditis</taxon>
    </lineage>
</organism>
<proteinExistence type="inferred from homology"/>